<dbReference type="EC" id="6.1.1.20"/>
<dbReference type="EMBL" id="AAFI02000019">
    <property type="protein sequence ID" value="EAL68838.2"/>
    <property type="molecule type" value="Genomic_DNA"/>
</dbReference>
<dbReference type="RefSeq" id="XP_642684.2">
    <property type="nucleotide sequence ID" value="XM_637592.2"/>
</dbReference>
<dbReference type="SMR" id="Q550D2"/>
<dbReference type="FunCoup" id="Q550D2">
    <property type="interactions" value="1055"/>
</dbReference>
<dbReference type="STRING" id="44689.Q550D2"/>
<dbReference type="PaxDb" id="44689-DDB0231327"/>
<dbReference type="EnsemblProtists" id="EAL68838">
    <property type="protein sequence ID" value="EAL68838"/>
    <property type="gene ID" value="DDB_G0277303"/>
</dbReference>
<dbReference type="GeneID" id="8620873"/>
<dbReference type="KEGG" id="ddi:DDB_G0277303"/>
<dbReference type="dictyBase" id="DDB_G0277303">
    <property type="gene designation" value="phesB"/>
</dbReference>
<dbReference type="VEuPathDB" id="AmoebaDB:DDB_G0277303"/>
<dbReference type="eggNOG" id="KOG2472">
    <property type="taxonomic scope" value="Eukaryota"/>
</dbReference>
<dbReference type="HOGENOM" id="CLU_020279_2_0_1"/>
<dbReference type="InParanoid" id="Q550D2"/>
<dbReference type="OMA" id="FPGRCAN"/>
<dbReference type="PhylomeDB" id="Q550D2"/>
<dbReference type="PRO" id="PR:Q550D2"/>
<dbReference type="Proteomes" id="UP000002195">
    <property type="component" value="Chromosome 2"/>
</dbReference>
<dbReference type="GO" id="GO:0005737">
    <property type="term" value="C:cytoplasm"/>
    <property type="evidence" value="ECO:0000250"/>
    <property type="project" value="dictyBase"/>
</dbReference>
<dbReference type="GO" id="GO:0009328">
    <property type="term" value="C:phenylalanine-tRNA ligase complex"/>
    <property type="evidence" value="ECO:0000250"/>
    <property type="project" value="dictyBase"/>
</dbReference>
<dbReference type="GO" id="GO:0005524">
    <property type="term" value="F:ATP binding"/>
    <property type="evidence" value="ECO:0007669"/>
    <property type="project" value="UniProtKB-KW"/>
</dbReference>
<dbReference type="GO" id="GO:0000287">
    <property type="term" value="F:magnesium ion binding"/>
    <property type="evidence" value="ECO:0000250"/>
    <property type="project" value="UniProtKB"/>
</dbReference>
<dbReference type="GO" id="GO:0004826">
    <property type="term" value="F:phenylalanine-tRNA ligase activity"/>
    <property type="evidence" value="ECO:0000250"/>
    <property type="project" value="dictyBase"/>
</dbReference>
<dbReference type="GO" id="GO:0003723">
    <property type="term" value="F:RNA binding"/>
    <property type="evidence" value="ECO:0007669"/>
    <property type="project" value="InterPro"/>
</dbReference>
<dbReference type="GO" id="GO:0006432">
    <property type="term" value="P:phenylalanyl-tRNA aminoacylation"/>
    <property type="evidence" value="ECO:0000250"/>
    <property type="project" value="dictyBase"/>
</dbReference>
<dbReference type="FunFam" id="3.30.56.10:FF:000005">
    <property type="entry name" value="Phenylalanine--tRNA ligase beta subunit"/>
    <property type="match status" value="1"/>
</dbReference>
<dbReference type="FunFam" id="3.50.40.10:FF:000002">
    <property type="entry name" value="phenylalanine--tRNA ligase beta subunit"/>
    <property type="match status" value="1"/>
</dbReference>
<dbReference type="FunFam" id="3.30.56.10:FF:000004">
    <property type="entry name" value="Phenylalanyl-tRNA synthetase, beta subunit"/>
    <property type="match status" value="1"/>
</dbReference>
<dbReference type="Gene3D" id="3.30.56.10">
    <property type="match status" value="2"/>
</dbReference>
<dbReference type="Gene3D" id="3.30.930.10">
    <property type="entry name" value="Bira Bifunctional Protein, Domain 2"/>
    <property type="match status" value="1"/>
</dbReference>
<dbReference type="Gene3D" id="3.50.40.10">
    <property type="entry name" value="Phenylalanyl-trna Synthetase, Chain B, domain 3"/>
    <property type="match status" value="1"/>
</dbReference>
<dbReference type="InterPro" id="IPR045864">
    <property type="entry name" value="aa-tRNA-synth_II/BPL/LPL"/>
</dbReference>
<dbReference type="InterPro" id="IPR005146">
    <property type="entry name" value="B3/B4_tRNA-bd"/>
</dbReference>
<dbReference type="InterPro" id="IPR009061">
    <property type="entry name" value="DNA-bd_dom_put_sf"/>
</dbReference>
<dbReference type="InterPro" id="IPR045060">
    <property type="entry name" value="Phe-tRNA-ligase_IIc_bsu"/>
</dbReference>
<dbReference type="InterPro" id="IPR004531">
    <property type="entry name" value="Phe-tRNA-synth_IIc_bsu_arc_euk"/>
</dbReference>
<dbReference type="InterPro" id="IPR020825">
    <property type="entry name" value="Phe-tRNA_synthase-like_B3/B4"/>
</dbReference>
<dbReference type="InterPro" id="IPR041616">
    <property type="entry name" value="PheRS_beta_core"/>
</dbReference>
<dbReference type="InterPro" id="IPR040659">
    <property type="entry name" value="PhetRS_B1"/>
</dbReference>
<dbReference type="InterPro" id="IPR005147">
    <property type="entry name" value="tRNA_synthase_B5-dom"/>
</dbReference>
<dbReference type="NCBIfam" id="TIGR00471">
    <property type="entry name" value="pheT_arch"/>
    <property type="match status" value="1"/>
</dbReference>
<dbReference type="PANTHER" id="PTHR10947:SF0">
    <property type="entry name" value="PHENYLALANINE--TRNA LIGASE BETA SUBUNIT"/>
    <property type="match status" value="1"/>
</dbReference>
<dbReference type="PANTHER" id="PTHR10947">
    <property type="entry name" value="PHENYLALANYL-TRNA SYNTHETASE BETA CHAIN AND LEUCINE-RICH REPEAT-CONTAINING PROTEIN 47"/>
    <property type="match status" value="1"/>
</dbReference>
<dbReference type="Pfam" id="PF03483">
    <property type="entry name" value="B3_4"/>
    <property type="match status" value="1"/>
</dbReference>
<dbReference type="Pfam" id="PF03484">
    <property type="entry name" value="B5"/>
    <property type="match status" value="1"/>
</dbReference>
<dbReference type="Pfam" id="PF18262">
    <property type="entry name" value="PhetRS_B1"/>
    <property type="match status" value="1"/>
</dbReference>
<dbReference type="Pfam" id="PF17759">
    <property type="entry name" value="tRNA_synthFbeta"/>
    <property type="match status" value="1"/>
</dbReference>
<dbReference type="SMART" id="SM00873">
    <property type="entry name" value="B3_4"/>
    <property type="match status" value="1"/>
</dbReference>
<dbReference type="SMART" id="SM00874">
    <property type="entry name" value="B5"/>
    <property type="match status" value="1"/>
</dbReference>
<dbReference type="SUPFAM" id="SSF55681">
    <property type="entry name" value="Class II aaRS and biotin synthetases"/>
    <property type="match status" value="1"/>
</dbReference>
<dbReference type="SUPFAM" id="SSF56037">
    <property type="entry name" value="PheT/TilS domain"/>
    <property type="match status" value="1"/>
</dbReference>
<dbReference type="SUPFAM" id="SSF46955">
    <property type="entry name" value="Putative DNA-binding domain"/>
    <property type="match status" value="2"/>
</dbReference>
<dbReference type="PROSITE" id="PS51483">
    <property type="entry name" value="B5"/>
    <property type="match status" value="1"/>
</dbReference>
<reference key="1">
    <citation type="journal article" date="2002" name="Nature">
        <title>Sequence and analysis of chromosome 2 of Dictyostelium discoideum.</title>
        <authorList>
            <person name="Gloeckner G."/>
            <person name="Eichinger L."/>
            <person name="Szafranski K."/>
            <person name="Pachebat J.A."/>
            <person name="Bankier A.T."/>
            <person name="Dear P.H."/>
            <person name="Lehmann R."/>
            <person name="Baumgart C."/>
            <person name="Parra G."/>
            <person name="Abril J.F."/>
            <person name="Guigo R."/>
            <person name="Kumpf K."/>
            <person name="Tunggal B."/>
            <person name="Cox E.C."/>
            <person name="Quail M.A."/>
            <person name="Platzer M."/>
            <person name="Rosenthal A."/>
            <person name="Noegel A.A."/>
        </authorList>
    </citation>
    <scope>NUCLEOTIDE SEQUENCE [LARGE SCALE GENOMIC DNA]</scope>
    <source>
        <strain>AX4</strain>
    </source>
</reference>
<reference key="2">
    <citation type="journal article" date="2005" name="Nature">
        <title>The genome of the social amoeba Dictyostelium discoideum.</title>
        <authorList>
            <person name="Eichinger L."/>
            <person name="Pachebat J.A."/>
            <person name="Gloeckner G."/>
            <person name="Rajandream M.A."/>
            <person name="Sucgang R."/>
            <person name="Berriman M."/>
            <person name="Song J."/>
            <person name="Olsen R."/>
            <person name="Szafranski K."/>
            <person name="Xu Q."/>
            <person name="Tunggal B."/>
            <person name="Kummerfeld S."/>
            <person name="Madera M."/>
            <person name="Konfortov B.A."/>
            <person name="Rivero F."/>
            <person name="Bankier A.T."/>
            <person name="Lehmann R."/>
            <person name="Hamlin N."/>
            <person name="Davies R."/>
            <person name="Gaudet P."/>
            <person name="Fey P."/>
            <person name="Pilcher K."/>
            <person name="Chen G."/>
            <person name="Saunders D."/>
            <person name="Sodergren E.J."/>
            <person name="Davis P."/>
            <person name="Kerhornou A."/>
            <person name="Nie X."/>
            <person name="Hall N."/>
            <person name="Anjard C."/>
            <person name="Hemphill L."/>
            <person name="Bason N."/>
            <person name="Farbrother P."/>
            <person name="Desany B."/>
            <person name="Just E."/>
            <person name="Morio T."/>
            <person name="Rost R."/>
            <person name="Churcher C.M."/>
            <person name="Cooper J."/>
            <person name="Haydock S."/>
            <person name="van Driessche N."/>
            <person name="Cronin A."/>
            <person name="Goodhead I."/>
            <person name="Muzny D.M."/>
            <person name="Mourier T."/>
            <person name="Pain A."/>
            <person name="Lu M."/>
            <person name="Harper D."/>
            <person name="Lindsay R."/>
            <person name="Hauser H."/>
            <person name="James K.D."/>
            <person name="Quiles M."/>
            <person name="Madan Babu M."/>
            <person name="Saito T."/>
            <person name="Buchrieser C."/>
            <person name="Wardroper A."/>
            <person name="Felder M."/>
            <person name="Thangavelu M."/>
            <person name="Johnson D."/>
            <person name="Knights A."/>
            <person name="Loulseged H."/>
            <person name="Mungall K.L."/>
            <person name="Oliver K."/>
            <person name="Price C."/>
            <person name="Quail M.A."/>
            <person name="Urushihara H."/>
            <person name="Hernandez J."/>
            <person name="Rabbinowitsch E."/>
            <person name="Steffen D."/>
            <person name="Sanders M."/>
            <person name="Ma J."/>
            <person name="Kohara Y."/>
            <person name="Sharp S."/>
            <person name="Simmonds M.N."/>
            <person name="Spiegler S."/>
            <person name="Tivey A."/>
            <person name="Sugano S."/>
            <person name="White B."/>
            <person name="Walker D."/>
            <person name="Woodward J.R."/>
            <person name="Winckler T."/>
            <person name="Tanaka Y."/>
            <person name="Shaulsky G."/>
            <person name="Schleicher M."/>
            <person name="Weinstock G.M."/>
            <person name="Rosenthal A."/>
            <person name="Cox E.C."/>
            <person name="Chisholm R.L."/>
            <person name="Gibbs R.A."/>
            <person name="Loomis W.F."/>
            <person name="Platzer M."/>
            <person name="Kay R.R."/>
            <person name="Williams J.G."/>
            <person name="Dear P.H."/>
            <person name="Noegel A.A."/>
            <person name="Barrell B.G."/>
            <person name="Kuspa A."/>
        </authorList>
    </citation>
    <scope>NUCLEOTIDE SEQUENCE [LARGE SCALE GENOMIC DNA]</scope>
    <source>
        <strain>AX4</strain>
    </source>
</reference>
<name>SYFB_DICDI</name>
<accession>Q550D2</accession>
<accession>Q86AR4</accession>
<protein>
    <recommendedName>
        <fullName>Phenylalanine--tRNA ligase beta subunit</fullName>
        <ecNumber>6.1.1.20</ecNumber>
    </recommendedName>
    <alternativeName>
        <fullName>Phenylalanyl-tRNA synthetase beta subunit</fullName>
        <shortName>PheRS</shortName>
    </alternativeName>
</protein>
<keyword id="KW-0030">Aminoacyl-tRNA synthetase</keyword>
<keyword id="KW-0067">ATP-binding</keyword>
<keyword id="KW-0963">Cytoplasm</keyword>
<keyword id="KW-0436">Ligase</keyword>
<keyword id="KW-0460">Magnesium</keyword>
<keyword id="KW-0479">Metal-binding</keyword>
<keyword id="KW-0547">Nucleotide-binding</keyword>
<keyword id="KW-0648">Protein biosynthesis</keyword>
<keyword id="KW-1185">Reference proteome</keyword>
<sequence>MPKVNINRDILYKALGFYIKTYTQEQFEDLCFAFGVELDEVTSEREMKKNETGVEDLTVSDDVIYKIDVSANRYDLLCLEGIARALNVYNHKASIPKYQIVPPKNSHEKLYISKEVESVRPVIVAGILRDITFTQESYDSFIDLQEKLHANICKKRSLVSIGTHDLDTLSGPFYYKALAPKDIKFVPLSQTKEYNAEELFKFYDESSSHLKKFLPIIKDSPVYPVIYDSKNVVCSLPPIINGEHSKIKLSTKNVFIEVTANDRTKANIVLNTMLTMFSEYCKQPFTMEQVEVIDADGKSTGLYPQIQEKQINAQVDYINKSAGINITPNDMVTLLKRMSLQSKLSDDEKSIIVDVPVTRSDIMHACDIMEDVAIGYGYDNLKKEIPNCNTIGRVQPINKLSELLANEIALAGFTEIMTFVLCQNRDNFTALNKADDGSSVKISNAVSEEFTEVRTNLVSTLLKSVSANKAAPLPLKMFEISDVSIKGSLGNKDLSDPNSNNSDVGAYNKRMLGAIYCNQSAKIEVIHGLLDRIMLVLDIKLDATRSSNKGYYLELSNDKLFLPGTGINVIVNGKRVGHMGIVHPLVLKNYSCSFPCTILELELTIDTMAHNVLLREN</sequence>
<gene>
    <name type="primary">phesB</name>
    <name type="synonym">pheS</name>
    <name type="ORF">DDB_G0277303</name>
</gene>
<comment type="catalytic activity">
    <reaction>
        <text>tRNA(Phe) + L-phenylalanine + ATP = L-phenylalanyl-tRNA(Phe) + AMP + diphosphate + H(+)</text>
        <dbReference type="Rhea" id="RHEA:19413"/>
        <dbReference type="Rhea" id="RHEA-COMP:9668"/>
        <dbReference type="Rhea" id="RHEA-COMP:9699"/>
        <dbReference type="ChEBI" id="CHEBI:15378"/>
        <dbReference type="ChEBI" id="CHEBI:30616"/>
        <dbReference type="ChEBI" id="CHEBI:33019"/>
        <dbReference type="ChEBI" id="CHEBI:58095"/>
        <dbReference type="ChEBI" id="CHEBI:78442"/>
        <dbReference type="ChEBI" id="CHEBI:78531"/>
        <dbReference type="ChEBI" id="CHEBI:456215"/>
        <dbReference type="EC" id="6.1.1.20"/>
    </reaction>
</comment>
<comment type="cofactor">
    <cofactor evidence="2">
        <name>Mg(2+)</name>
        <dbReference type="ChEBI" id="CHEBI:18420"/>
    </cofactor>
</comment>
<comment type="subunit">
    <text evidence="1">Tetramer of two alpha and two beta subunits.</text>
</comment>
<comment type="subcellular location">
    <subcellularLocation>
        <location evidence="1">Cytoplasm</location>
    </subcellularLocation>
</comment>
<comment type="similarity">
    <text evidence="4">Belongs to the phenylalanyl-tRNA synthetase beta subunit family. Type 2 subfamily.</text>
</comment>
<feature type="chain" id="PRO_0000327539" description="Phenylalanine--tRNA ligase beta subunit">
    <location>
        <begin position="1"/>
        <end position="617"/>
    </location>
</feature>
<feature type="domain" description="B5" evidence="3">
    <location>
        <begin position="306"/>
        <end position="383"/>
    </location>
</feature>
<feature type="binding site" evidence="3">
    <location>
        <position position="361"/>
    </location>
    <ligand>
        <name>Mg(2+)</name>
        <dbReference type="ChEBI" id="CHEBI:18420"/>
        <note>shared with alpha subunit</note>
    </ligand>
</feature>
<feature type="binding site" evidence="3">
    <location>
        <position position="367"/>
    </location>
    <ligand>
        <name>Mg(2+)</name>
        <dbReference type="ChEBI" id="CHEBI:18420"/>
        <note>shared with alpha subunit</note>
    </ligand>
</feature>
<feature type="binding site" evidence="3">
    <location>
        <position position="370"/>
    </location>
    <ligand>
        <name>Mg(2+)</name>
        <dbReference type="ChEBI" id="CHEBI:18420"/>
        <note>shared with alpha subunit</note>
    </ligand>
</feature>
<feature type="binding site" evidence="3">
    <location>
        <position position="371"/>
    </location>
    <ligand>
        <name>Mg(2+)</name>
        <dbReference type="ChEBI" id="CHEBI:18420"/>
        <note>shared with alpha subunit</note>
    </ligand>
</feature>
<proteinExistence type="inferred from homology"/>
<evidence type="ECO:0000250" key="1"/>
<evidence type="ECO:0000250" key="2">
    <source>
        <dbReference type="UniProtKB" id="A5K464"/>
    </source>
</evidence>
<evidence type="ECO:0000255" key="3">
    <source>
        <dbReference type="PROSITE-ProRule" id="PRU00816"/>
    </source>
</evidence>
<evidence type="ECO:0000305" key="4"/>
<organism>
    <name type="scientific">Dictyostelium discoideum</name>
    <name type="common">Social amoeba</name>
    <dbReference type="NCBI Taxonomy" id="44689"/>
    <lineage>
        <taxon>Eukaryota</taxon>
        <taxon>Amoebozoa</taxon>
        <taxon>Evosea</taxon>
        <taxon>Eumycetozoa</taxon>
        <taxon>Dictyostelia</taxon>
        <taxon>Dictyosteliales</taxon>
        <taxon>Dictyosteliaceae</taxon>
        <taxon>Dictyostelium</taxon>
    </lineage>
</organism>